<feature type="chain" id="PRO_0000122777" description="Protein RecA">
    <location>
        <begin position="1"/>
        <end position="348"/>
    </location>
</feature>
<feature type="binding site" evidence="1">
    <location>
        <begin position="66"/>
        <end position="73"/>
    </location>
    <ligand>
        <name>ATP</name>
        <dbReference type="ChEBI" id="CHEBI:30616"/>
    </ligand>
</feature>
<evidence type="ECO:0000255" key="1">
    <source>
        <dbReference type="HAMAP-Rule" id="MF_00268"/>
    </source>
</evidence>
<sequence length="348" mass="37613">MSDDKSKALAAALAQIEKSFGKGAIMKMDGSQQEENLEVISTGSLGLDLALGVGGLPRGRIVEIFGPESSGKTTLCLEAVAQCQKNGGVCAFVDAEHAFDPVYARKLGVKVEELYLSQPDTGEQALEICDTLVRSGGIDMVVVDSVAALVPKAEIEGDMGDSHVGLQARLMSQALRKLTGHIKKTNTLVVFINQIRMKIGVMFGSPETTTGGNALKFYSSVRLDIRRTGSIKKGEEVLGNETRVKVIKNKVAPPFRQAEFDILYGEGISWEGELIDIGVKNDIINKSGAWYSYNGAKIGQGKDNVRVWLKENPEVADEIDAKIRALNGVEMHITEGTQDETDGERPEE</sequence>
<accession>P56987</accession>
<accession>A1ISN3</accession>
<accession>P49984</accession>
<proteinExistence type="inferred from homology"/>
<dbReference type="EMBL" id="AL157959">
    <property type="protein sequence ID" value="CAM08792.1"/>
    <property type="molecule type" value="Genomic_DNA"/>
</dbReference>
<dbReference type="EMBL" id="X64847">
    <property type="protein sequence ID" value="CAA46059.1"/>
    <property type="molecule type" value="Genomic_DNA"/>
</dbReference>
<dbReference type="PIR" id="F81860">
    <property type="entry name" value="F81860"/>
</dbReference>
<dbReference type="RefSeq" id="WP_002246270.1">
    <property type="nucleotide sequence ID" value="NC_003116.1"/>
</dbReference>
<dbReference type="SMR" id="P56987"/>
<dbReference type="EnsemblBacteria" id="CAM08792">
    <property type="protein sequence ID" value="CAM08792"/>
    <property type="gene ID" value="NMA1658"/>
</dbReference>
<dbReference type="KEGG" id="nma:NMA1658"/>
<dbReference type="HOGENOM" id="CLU_040469_3_2_4"/>
<dbReference type="Proteomes" id="UP000000626">
    <property type="component" value="Chromosome"/>
</dbReference>
<dbReference type="GO" id="GO:0005829">
    <property type="term" value="C:cytosol"/>
    <property type="evidence" value="ECO:0007669"/>
    <property type="project" value="TreeGrafter"/>
</dbReference>
<dbReference type="GO" id="GO:0005524">
    <property type="term" value="F:ATP binding"/>
    <property type="evidence" value="ECO:0007669"/>
    <property type="project" value="UniProtKB-UniRule"/>
</dbReference>
<dbReference type="GO" id="GO:0016887">
    <property type="term" value="F:ATP hydrolysis activity"/>
    <property type="evidence" value="ECO:0007669"/>
    <property type="project" value="InterPro"/>
</dbReference>
<dbReference type="GO" id="GO:0140664">
    <property type="term" value="F:ATP-dependent DNA damage sensor activity"/>
    <property type="evidence" value="ECO:0007669"/>
    <property type="project" value="InterPro"/>
</dbReference>
<dbReference type="GO" id="GO:0003684">
    <property type="term" value="F:damaged DNA binding"/>
    <property type="evidence" value="ECO:0007669"/>
    <property type="project" value="UniProtKB-UniRule"/>
</dbReference>
<dbReference type="GO" id="GO:0003697">
    <property type="term" value="F:single-stranded DNA binding"/>
    <property type="evidence" value="ECO:0007669"/>
    <property type="project" value="UniProtKB-UniRule"/>
</dbReference>
<dbReference type="GO" id="GO:0006310">
    <property type="term" value="P:DNA recombination"/>
    <property type="evidence" value="ECO:0007669"/>
    <property type="project" value="UniProtKB-UniRule"/>
</dbReference>
<dbReference type="GO" id="GO:0006281">
    <property type="term" value="P:DNA repair"/>
    <property type="evidence" value="ECO:0007669"/>
    <property type="project" value="UniProtKB-UniRule"/>
</dbReference>
<dbReference type="GO" id="GO:0009432">
    <property type="term" value="P:SOS response"/>
    <property type="evidence" value="ECO:0007669"/>
    <property type="project" value="UniProtKB-UniRule"/>
</dbReference>
<dbReference type="CDD" id="cd00983">
    <property type="entry name" value="RecA"/>
    <property type="match status" value="1"/>
</dbReference>
<dbReference type="FunFam" id="3.40.50.300:FF:000087">
    <property type="entry name" value="Recombinase RecA"/>
    <property type="match status" value="1"/>
</dbReference>
<dbReference type="Gene3D" id="3.40.50.300">
    <property type="entry name" value="P-loop containing nucleotide triphosphate hydrolases"/>
    <property type="match status" value="1"/>
</dbReference>
<dbReference type="HAMAP" id="MF_00268">
    <property type="entry name" value="RecA"/>
    <property type="match status" value="1"/>
</dbReference>
<dbReference type="InterPro" id="IPR003593">
    <property type="entry name" value="AAA+_ATPase"/>
</dbReference>
<dbReference type="InterPro" id="IPR013765">
    <property type="entry name" value="DNA_recomb/repair_RecA"/>
</dbReference>
<dbReference type="InterPro" id="IPR020584">
    <property type="entry name" value="DNA_recomb/repair_RecA_CS"/>
</dbReference>
<dbReference type="InterPro" id="IPR027417">
    <property type="entry name" value="P-loop_NTPase"/>
</dbReference>
<dbReference type="InterPro" id="IPR049261">
    <property type="entry name" value="RecA-like_C"/>
</dbReference>
<dbReference type="InterPro" id="IPR049428">
    <property type="entry name" value="RecA-like_N"/>
</dbReference>
<dbReference type="InterPro" id="IPR020588">
    <property type="entry name" value="RecA_ATP-bd"/>
</dbReference>
<dbReference type="InterPro" id="IPR023400">
    <property type="entry name" value="RecA_C_sf"/>
</dbReference>
<dbReference type="InterPro" id="IPR020587">
    <property type="entry name" value="RecA_monomer-monomer_interface"/>
</dbReference>
<dbReference type="NCBIfam" id="TIGR02012">
    <property type="entry name" value="tigrfam_recA"/>
    <property type="match status" value="1"/>
</dbReference>
<dbReference type="PANTHER" id="PTHR45900:SF1">
    <property type="entry name" value="MITOCHONDRIAL DNA REPAIR PROTEIN RECA HOMOLOG-RELATED"/>
    <property type="match status" value="1"/>
</dbReference>
<dbReference type="PANTHER" id="PTHR45900">
    <property type="entry name" value="RECA"/>
    <property type="match status" value="1"/>
</dbReference>
<dbReference type="Pfam" id="PF00154">
    <property type="entry name" value="RecA"/>
    <property type="match status" value="1"/>
</dbReference>
<dbReference type="Pfam" id="PF21096">
    <property type="entry name" value="RecA_C"/>
    <property type="match status" value="1"/>
</dbReference>
<dbReference type="PRINTS" id="PR00142">
    <property type="entry name" value="RECA"/>
</dbReference>
<dbReference type="SMART" id="SM00382">
    <property type="entry name" value="AAA"/>
    <property type="match status" value="1"/>
</dbReference>
<dbReference type="SUPFAM" id="SSF52540">
    <property type="entry name" value="P-loop containing nucleoside triphosphate hydrolases"/>
    <property type="match status" value="1"/>
</dbReference>
<dbReference type="SUPFAM" id="SSF54752">
    <property type="entry name" value="RecA protein, C-terminal domain"/>
    <property type="match status" value="1"/>
</dbReference>
<dbReference type="PROSITE" id="PS00321">
    <property type="entry name" value="RECA_1"/>
    <property type="match status" value="1"/>
</dbReference>
<dbReference type="PROSITE" id="PS50162">
    <property type="entry name" value="RECA_2"/>
    <property type="match status" value="1"/>
</dbReference>
<dbReference type="PROSITE" id="PS50163">
    <property type="entry name" value="RECA_3"/>
    <property type="match status" value="1"/>
</dbReference>
<reference key="1">
    <citation type="journal article" date="2000" name="Nature">
        <title>Complete DNA sequence of a serogroup A strain of Neisseria meningitidis Z2491.</title>
        <authorList>
            <person name="Parkhill J."/>
            <person name="Achtman M."/>
            <person name="James K.D."/>
            <person name="Bentley S.D."/>
            <person name="Churcher C.M."/>
            <person name="Klee S.R."/>
            <person name="Morelli G."/>
            <person name="Basham D."/>
            <person name="Brown D."/>
            <person name="Chillingworth T."/>
            <person name="Davies R.M."/>
            <person name="Davis P."/>
            <person name="Devlin K."/>
            <person name="Feltwell T."/>
            <person name="Hamlin N."/>
            <person name="Holroyd S."/>
            <person name="Jagels K."/>
            <person name="Leather S."/>
            <person name="Moule S."/>
            <person name="Mungall K.L."/>
            <person name="Quail M.A."/>
            <person name="Rajandream M.A."/>
            <person name="Rutherford K.M."/>
            <person name="Simmonds M."/>
            <person name="Skelton J."/>
            <person name="Whitehead S."/>
            <person name="Spratt B.G."/>
            <person name="Barrell B.G."/>
        </authorList>
    </citation>
    <scope>NUCLEOTIDE SEQUENCE [LARGE SCALE GENOMIC DNA]</scope>
    <source>
        <strain>DSM 15465 / Z2491</strain>
    </source>
</reference>
<reference key="2">
    <citation type="journal article" date="1992" name="Mol. Microbiol.">
        <title>Sequence diversity within the argF, fbp and recA genes of natural isolates of Neisseria meningitidis: interspecies recombination within the argF gene.</title>
        <authorList>
            <person name="Zhou J."/>
            <person name="Spratt B.G."/>
        </authorList>
    </citation>
    <scope>NUCLEOTIDE SEQUENCE [GENOMIC DNA] OF 24-297</scope>
    <source>
        <strain>CCUG 23099 / HF46 / Serogroup A / Serotype NT</strain>
    </source>
</reference>
<name>RECA_NEIMA</name>
<comment type="function">
    <text evidence="1">Can catalyze the hydrolysis of ATP in the presence of single-stranded DNA, the ATP-dependent uptake of single-stranded DNA by duplex DNA, and the ATP-dependent hybridization of homologous single-stranded DNAs. It interacts with LexA causing its activation and leading to its autocatalytic cleavage.</text>
</comment>
<comment type="subcellular location">
    <subcellularLocation>
        <location evidence="1">Cytoplasm</location>
    </subcellularLocation>
</comment>
<comment type="similarity">
    <text evidence="1">Belongs to the RecA family.</text>
</comment>
<keyword id="KW-0067">ATP-binding</keyword>
<keyword id="KW-0963">Cytoplasm</keyword>
<keyword id="KW-0227">DNA damage</keyword>
<keyword id="KW-0233">DNA recombination</keyword>
<keyword id="KW-0234">DNA repair</keyword>
<keyword id="KW-0238">DNA-binding</keyword>
<keyword id="KW-0547">Nucleotide-binding</keyword>
<keyword id="KW-0742">SOS response</keyword>
<organism>
    <name type="scientific">Neisseria meningitidis serogroup A / serotype 4A (strain DSM 15465 / Z2491)</name>
    <dbReference type="NCBI Taxonomy" id="122587"/>
    <lineage>
        <taxon>Bacteria</taxon>
        <taxon>Pseudomonadati</taxon>
        <taxon>Pseudomonadota</taxon>
        <taxon>Betaproteobacteria</taxon>
        <taxon>Neisseriales</taxon>
        <taxon>Neisseriaceae</taxon>
        <taxon>Neisseria</taxon>
    </lineage>
</organism>
<gene>
    <name evidence="1" type="primary">recA</name>
    <name type="ordered locus">NMA1658</name>
</gene>
<protein>
    <recommendedName>
        <fullName evidence="1">Protein RecA</fullName>
    </recommendedName>
    <alternativeName>
        <fullName evidence="1">Recombinase A</fullName>
    </alternativeName>
</protein>